<dbReference type="EC" id="1.13.11.93" evidence="1"/>
<dbReference type="EMBL" id="AE015451">
    <property type="protein sequence ID" value="AAN70825.1"/>
    <property type="molecule type" value="Genomic_DNA"/>
</dbReference>
<dbReference type="RefSeq" id="NP_747361.1">
    <property type="nucleotide sequence ID" value="NC_002947.4"/>
</dbReference>
<dbReference type="RefSeq" id="WP_010955773.1">
    <property type="nucleotide sequence ID" value="NZ_CP169744.1"/>
</dbReference>
<dbReference type="PDB" id="6W1G">
    <property type="method" value="X-ray"/>
    <property type="resolution" value="1.14 A"/>
    <property type="chains" value="A=1-464"/>
</dbReference>
<dbReference type="PDB" id="6W1H">
    <property type="method" value="X-ray"/>
    <property type="resolution" value="1.42 A"/>
    <property type="chains" value="A=1-464"/>
</dbReference>
<dbReference type="PDBsum" id="6W1G"/>
<dbReference type="PDBsum" id="6W1H"/>
<dbReference type="SMR" id="Q88CC1"/>
<dbReference type="STRING" id="160488.PP_5260"/>
<dbReference type="PaxDb" id="160488-PP_5260"/>
<dbReference type="DNASU" id="1042329"/>
<dbReference type="KEGG" id="ppu:PP_5260"/>
<dbReference type="PATRIC" id="fig|160488.4.peg.5612"/>
<dbReference type="eggNOG" id="COG5383">
    <property type="taxonomic scope" value="Bacteria"/>
</dbReference>
<dbReference type="HOGENOM" id="CLU_026640_0_0_6"/>
<dbReference type="OrthoDB" id="4394119at2"/>
<dbReference type="PhylomeDB" id="Q88CC1"/>
<dbReference type="BioCyc" id="MetaCyc:G1G01-5617-MONOMER"/>
<dbReference type="BioCyc" id="PPUT160488:G1G01-5617-MONOMER"/>
<dbReference type="Proteomes" id="UP000000556">
    <property type="component" value="Chromosome"/>
</dbReference>
<dbReference type="GO" id="GO:0051213">
    <property type="term" value="F:dioxygenase activity"/>
    <property type="evidence" value="ECO:0007669"/>
    <property type="project" value="UniProtKB-KW"/>
</dbReference>
<dbReference type="CDD" id="cd16348">
    <property type="entry name" value="VOC_YdcJ_like"/>
    <property type="match status" value="1"/>
</dbReference>
<dbReference type="Gene3D" id="3.10.180.80">
    <property type="entry name" value="Uncharacterised protein PF07063, DUF1338"/>
    <property type="match status" value="1"/>
</dbReference>
<dbReference type="InterPro" id="IPR009770">
    <property type="entry name" value="HGLS"/>
</dbReference>
<dbReference type="InterPro" id="IPR047869">
    <property type="entry name" value="YdcJ_bac-like"/>
</dbReference>
<dbReference type="PANTHER" id="PTHR39479">
    <property type="match status" value="1"/>
</dbReference>
<dbReference type="PANTHER" id="PTHR39479:SF2">
    <property type="entry name" value="2-OXOADIPATE DIOXYGENASE_DECARBOXYLASE"/>
    <property type="match status" value="1"/>
</dbReference>
<dbReference type="Pfam" id="PF07063">
    <property type="entry name" value="HGLS"/>
    <property type="match status" value="1"/>
</dbReference>
<dbReference type="SMART" id="SM01150">
    <property type="entry name" value="DUF1338"/>
    <property type="match status" value="1"/>
</dbReference>
<proteinExistence type="evidence at protein level"/>
<organism>
    <name type="scientific">Pseudomonas putida (strain ATCC 47054 / DSM 6125 / CFBP 8728 / NCIMB 11950 / KT2440)</name>
    <dbReference type="NCBI Taxonomy" id="160488"/>
    <lineage>
        <taxon>Bacteria</taxon>
        <taxon>Pseudomonadati</taxon>
        <taxon>Pseudomonadota</taxon>
        <taxon>Gammaproteobacteria</taxon>
        <taxon>Pseudomonadales</taxon>
        <taxon>Pseudomonadaceae</taxon>
        <taxon>Pseudomonas</taxon>
    </lineage>
</organism>
<reference key="1">
    <citation type="journal article" date="2002" name="Environ. Microbiol.">
        <title>Complete genome sequence and comparative analysis of the metabolically versatile Pseudomonas putida KT2440.</title>
        <authorList>
            <person name="Nelson K.E."/>
            <person name="Weinel C."/>
            <person name="Paulsen I.T."/>
            <person name="Dodson R.J."/>
            <person name="Hilbert H."/>
            <person name="Martins dos Santos V.A.P."/>
            <person name="Fouts D.E."/>
            <person name="Gill S.R."/>
            <person name="Pop M."/>
            <person name="Holmes M."/>
            <person name="Brinkac L.M."/>
            <person name="Beanan M.J."/>
            <person name="DeBoy R.T."/>
            <person name="Daugherty S.C."/>
            <person name="Kolonay J.F."/>
            <person name="Madupu R."/>
            <person name="Nelson W.C."/>
            <person name="White O."/>
            <person name="Peterson J.D."/>
            <person name="Khouri H.M."/>
            <person name="Hance I."/>
            <person name="Chris Lee P."/>
            <person name="Holtzapple E.K."/>
            <person name="Scanlan D."/>
            <person name="Tran K."/>
            <person name="Moazzez A."/>
            <person name="Utterback T.R."/>
            <person name="Rizzo M."/>
            <person name="Lee K."/>
            <person name="Kosack D."/>
            <person name="Moestl D."/>
            <person name="Wedler H."/>
            <person name="Lauber J."/>
            <person name="Stjepandic D."/>
            <person name="Hoheisel J."/>
            <person name="Straetz M."/>
            <person name="Heim S."/>
            <person name="Kiewitz C."/>
            <person name="Eisen J.A."/>
            <person name="Timmis K.N."/>
            <person name="Duesterhoeft A."/>
            <person name="Tuemmler B."/>
            <person name="Fraser C.M."/>
        </authorList>
    </citation>
    <scope>NUCLEOTIDE SEQUENCE [LARGE SCALE GENOMIC DNA]</scope>
    <source>
        <strain>ATCC 47054 / DSM 6125 / CFBP 8728 / NCIMB 11950 / KT2440</strain>
    </source>
</reference>
<reference key="2">
    <citation type="journal article" date="2019" name="MBio">
        <title>Massively parallel fitness profiling reveals multiple novel enzymes in Pseudomonas putida lysine metabolism.</title>
        <authorList>
            <person name="Thompson M.G."/>
            <person name="Blake-Hedges J.M."/>
            <person name="Cruz-Morales P."/>
            <person name="Barajas J.F."/>
            <person name="Curran S.C."/>
            <person name="Eiben C.B."/>
            <person name="Harris N.C."/>
            <person name="Benites V.T."/>
            <person name="Gin J.W."/>
            <person name="Sharpless W.A."/>
            <person name="Twigg F.F."/>
            <person name="Skyrud W."/>
            <person name="Krishna R.N."/>
            <person name="Pereira J.H."/>
            <person name="Baidoo E.E.K."/>
            <person name="Petzold C.J."/>
            <person name="Adams P.D."/>
            <person name="Arkin A.P."/>
            <person name="Deutschbauer A.M."/>
            <person name="Keasling J.D."/>
        </authorList>
    </citation>
    <scope>FUNCTION</scope>
    <scope>CATALYTIC ACTIVITY</scope>
    <scope>COFACTOR</scope>
    <scope>ACTIVITY REGULATION</scope>
    <scope>BIOPHYSICOCHEMICAL PROPERTIES</scope>
    <scope>PATHWAY</scope>
    <scope>INDUCTION</scope>
    <scope>DISRUPTION PHENOTYPE</scope>
    <source>
        <strain>ATCC 47054 / DSM 6125 / CFBP 8728 / NCIMB 11950 / KT2440</strain>
    </source>
</reference>
<reference evidence="7 8" key="3">
    <citation type="journal article" date="2020" name="Nat. Commun.">
        <title>An iron (II) dependent oxygenase performs the last missing step of plant lysine catabolism.</title>
        <authorList>
            <person name="Thompson M.G."/>
            <person name="Blake-Hedges J.M."/>
            <person name="Pereira J.H."/>
            <person name="Hangasky J.A."/>
            <person name="Belcher M.S."/>
            <person name="Moore W.M."/>
            <person name="Barajas J.F."/>
            <person name="Cruz-Morales P."/>
            <person name="Washington L.J."/>
            <person name="Haushalter R.W."/>
            <person name="Eiben C.B."/>
            <person name="Liu Y."/>
            <person name="Skyrud W."/>
            <person name="Benites V.T."/>
            <person name="Barnum T.P."/>
            <person name="Baidoo E.E.K."/>
            <person name="Scheller H.V."/>
            <person name="Marletta M.A."/>
            <person name="Shih P.M."/>
            <person name="Adams P.D."/>
            <person name="Keasling J.D."/>
        </authorList>
    </citation>
    <scope>X-RAY CRYSTALLOGRAPHY (1.14 ANGSTROMS) IN COMPLEXES WITH 2-OXOADIPATE AND NI(2+)</scope>
    <scope>FUNCTION</scope>
    <scope>CATALYTIC ACTIVITY</scope>
    <scope>REACTION MECHANISM</scope>
    <scope>BIOPHYSICOCHEMICAL PROPERTIES</scope>
    <scope>MUTAGENESIS OF ARG-74</scope>
</reference>
<evidence type="ECO:0000269" key="1">
    <source>
    </source>
</evidence>
<evidence type="ECO:0000269" key="2">
    <source>
    </source>
</evidence>
<evidence type="ECO:0000303" key="3">
    <source>
    </source>
</evidence>
<evidence type="ECO:0000305" key="4"/>
<evidence type="ECO:0000305" key="5">
    <source>
    </source>
</evidence>
<evidence type="ECO:0000312" key="6">
    <source>
        <dbReference type="EMBL" id="AAN70825.1"/>
    </source>
</evidence>
<evidence type="ECO:0007744" key="7">
    <source>
        <dbReference type="PDB" id="6W1G"/>
    </source>
</evidence>
<evidence type="ECO:0007744" key="8">
    <source>
        <dbReference type="PDB" id="6W1H"/>
    </source>
</evidence>
<evidence type="ECO:0007829" key="9">
    <source>
        <dbReference type="PDB" id="6W1G"/>
    </source>
</evidence>
<evidence type="ECO:0007829" key="10">
    <source>
        <dbReference type="PDB" id="6W1H"/>
    </source>
</evidence>
<gene>
    <name evidence="3" type="primary">hglS</name>
    <name evidence="3" type="synonym">ydcJ</name>
    <name evidence="6" type="ordered locus">PP_5260</name>
</gene>
<accession>Q88CC1</accession>
<feature type="chain" id="PRO_0000457782" description="2-oxoadipate dioxygenase/decarboxylase">
    <location>
        <begin position="1"/>
        <end position="464"/>
    </location>
</feature>
<feature type="binding site" evidence="2 8">
    <location>
        <position position="70"/>
    </location>
    <ligand>
        <name>2-oxoadipate</name>
        <dbReference type="ChEBI" id="CHEBI:57499"/>
    </ligand>
</feature>
<feature type="binding site" evidence="5 7 8">
    <location>
        <position position="70"/>
    </location>
    <ligand>
        <name>Fe(2+)</name>
        <dbReference type="ChEBI" id="CHEBI:29033"/>
    </ligand>
</feature>
<feature type="binding site" evidence="2 8">
    <location>
        <position position="74"/>
    </location>
    <ligand>
        <name>2-oxoadipate</name>
        <dbReference type="ChEBI" id="CHEBI:57499"/>
    </ligand>
</feature>
<feature type="binding site" evidence="2 8">
    <location>
        <position position="226"/>
    </location>
    <ligand>
        <name>2-oxoadipate</name>
        <dbReference type="ChEBI" id="CHEBI:57499"/>
    </ligand>
</feature>
<feature type="binding site" evidence="5 7 8">
    <location>
        <position position="226"/>
    </location>
    <ligand>
        <name>Fe(2+)</name>
        <dbReference type="ChEBI" id="CHEBI:29033"/>
    </ligand>
</feature>
<feature type="binding site" evidence="5 7 8">
    <location>
        <position position="294"/>
    </location>
    <ligand>
        <name>Fe(2+)</name>
        <dbReference type="ChEBI" id="CHEBI:29033"/>
    </ligand>
</feature>
<feature type="binding site" evidence="2 8">
    <location>
        <position position="402"/>
    </location>
    <ligand>
        <name>2-oxoadipate</name>
        <dbReference type="ChEBI" id="CHEBI:57499"/>
    </ligand>
</feature>
<feature type="site" description="Important for substrate specificity" evidence="5">
    <location>
        <position position="74"/>
    </location>
</feature>
<feature type="mutagenesis site" description="Loss of activity." evidence="2">
    <original>R</original>
    <variation>A</variation>
    <location>
        <position position="74"/>
    </location>
</feature>
<feature type="helix" evidence="9">
    <location>
        <begin position="9"/>
        <end position="27"/>
    </location>
</feature>
<feature type="helix" evidence="9">
    <location>
        <begin position="29"/>
        <end position="48"/>
    </location>
</feature>
<feature type="helix" evidence="9">
    <location>
        <begin position="50"/>
        <end position="59"/>
    </location>
</feature>
<feature type="helix" evidence="9">
    <location>
        <begin position="61"/>
        <end position="64"/>
    </location>
</feature>
<feature type="helix" evidence="9">
    <location>
        <begin position="65"/>
        <end position="67"/>
    </location>
</feature>
<feature type="strand" evidence="9">
    <location>
        <begin position="69"/>
        <end position="75"/>
    </location>
</feature>
<feature type="helix" evidence="9">
    <location>
        <begin position="78"/>
        <end position="90"/>
    </location>
</feature>
<feature type="strand" evidence="9">
    <location>
        <begin position="94"/>
        <end position="100"/>
    </location>
</feature>
<feature type="helix" evidence="9">
    <location>
        <begin position="102"/>
        <end position="104"/>
    </location>
</feature>
<feature type="strand" evidence="9">
    <location>
        <begin position="107"/>
        <end position="114"/>
    </location>
</feature>
<feature type="helix" evidence="9">
    <location>
        <begin position="118"/>
        <end position="123"/>
    </location>
</feature>
<feature type="strand" evidence="9">
    <location>
        <begin position="127"/>
        <end position="133"/>
    </location>
</feature>
<feature type="helix" evidence="10">
    <location>
        <begin position="135"/>
        <end position="137"/>
    </location>
</feature>
<feature type="helix" evidence="9">
    <location>
        <begin position="141"/>
        <end position="153"/>
    </location>
</feature>
<feature type="helix" evidence="9">
    <location>
        <begin position="159"/>
        <end position="171"/>
    </location>
</feature>
<feature type="helix" evidence="9">
    <location>
        <begin position="176"/>
        <end position="188"/>
    </location>
</feature>
<feature type="helix" evidence="9">
    <location>
        <begin position="200"/>
        <end position="209"/>
    </location>
</feature>
<feature type="helix" evidence="9">
    <location>
        <begin position="211"/>
        <end position="217"/>
    </location>
</feature>
<feature type="strand" evidence="9">
    <location>
        <begin position="219"/>
        <end position="221"/>
    </location>
</feature>
<feature type="strand" evidence="9">
    <location>
        <begin position="225"/>
        <end position="230"/>
    </location>
</feature>
<feature type="helix" evidence="9">
    <location>
        <begin position="234"/>
        <end position="240"/>
    </location>
</feature>
<feature type="helix" evidence="9">
    <location>
        <begin position="242"/>
        <end position="244"/>
    </location>
</feature>
<feature type="strand" evidence="9">
    <location>
        <begin position="253"/>
        <end position="255"/>
    </location>
</feature>
<feature type="strand" evidence="9">
    <location>
        <begin position="262"/>
        <end position="275"/>
    </location>
</feature>
<feature type="strand" evidence="10">
    <location>
        <begin position="279"/>
        <end position="281"/>
    </location>
</feature>
<feature type="strand" evidence="9">
    <location>
        <begin position="288"/>
        <end position="298"/>
    </location>
</feature>
<feature type="helix" evidence="9">
    <location>
        <begin position="304"/>
        <end position="321"/>
    </location>
</feature>
<feature type="helix" evidence="9">
    <location>
        <begin position="327"/>
        <end position="329"/>
    </location>
</feature>
<feature type="helix" evidence="9">
    <location>
        <begin position="330"/>
        <end position="341"/>
    </location>
</feature>
<feature type="helix" evidence="9">
    <location>
        <begin position="348"/>
        <end position="353"/>
    </location>
</feature>
<feature type="strand" evidence="9">
    <location>
        <begin position="359"/>
        <end position="363"/>
    </location>
</feature>
<feature type="helix" evidence="9">
    <location>
        <begin position="365"/>
        <end position="369"/>
    </location>
</feature>
<feature type="turn" evidence="9">
    <location>
        <begin position="370"/>
        <end position="372"/>
    </location>
</feature>
<feature type="helix" evidence="9">
    <location>
        <begin position="380"/>
        <end position="385"/>
    </location>
</feature>
<feature type="strand" evidence="9">
    <location>
        <begin position="388"/>
        <end position="393"/>
    </location>
</feature>
<feature type="helix" evidence="9">
    <location>
        <begin position="424"/>
        <end position="433"/>
    </location>
</feature>
<feature type="helix" evidence="9">
    <location>
        <begin position="440"/>
        <end position="458"/>
    </location>
</feature>
<sequence>MPANDFVSPDSIRAQFSAAMSLMYKQEVPLYGTLLELVSEINQQVMAQQPEVAEALRWTGEIERLDQERHGAIRVGTAEELATIARLFAVMGMQPVGYYDLSSAGVPVHSTAFRAVHEQSLHVSPFRVFTSLLRLELIDNPQLRELAQSILAKRQIFTSRALELIAQCEREGGLDAADAETFVQEALHTFRWHQDATVTAEQYQQLHDQHRLIADVVAFKGPHINHLTPRTLDIDAIQLGMPAKGIPPKAVVEGPPTRRHPILLRQTSFKALQETVAFRDQQGREGSHTARFGEIEQRGAALTPKGRQLYDKLLDATRVALGGAPAEANAERYMALLQANFAEFPDDLAQMREQGLAYFRYFATEKGLAARDQEGRPTTLQGLIDAGHVHFEALVYEDFLPVSAAGIFQSNLGDDAQAEYGSNANREAFEAALGLQVQDELALYAQSERRSLQACAQALNLGSM</sequence>
<protein>
    <recommendedName>
        <fullName evidence="4">2-oxoadipate dioxygenase/decarboxylase</fullName>
        <ecNumber evidence="1">1.13.11.93</ecNumber>
    </recommendedName>
    <alternativeName>
        <fullName evidence="3">2-hydroxyglutarate synthase</fullName>
    </alternativeName>
</protein>
<comment type="function">
    <text evidence="1 2">Catalyzes the decarboxylation and hydroxylation of 2-oxoadipate (2OA) to form D-2-hydroxyglutarate (D-2-HGA) (PubMed:31064836, PubMed:32523014). Is specific for 2-oxoadipate (PubMed:32523014). Is involved in a D-lysine catabolic pathway (PubMed:31064836).</text>
</comment>
<comment type="catalytic activity">
    <reaction evidence="1 2">
        <text>2-oxoadipate + O2 = (R)-2-hydroxyglutarate + CO2</text>
        <dbReference type="Rhea" id="RHEA:71787"/>
        <dbReference type="ChEBI" id="CHEBI:15379"/>
        <dbReference type="ChEBI" id="CHEBI:15801"/>
        <dbReference type="ChEBI" id="CHEBI:16526"/>
        <dbReference type="ChEBI" id="CHEBI:57499"/>
        <dbReference type="EC" id="1.13.11.93"/>
    </reaction>
    <physiologicalReaction direction="left-to-right" evidence="1">
        <dbReference type="Rhea" id="RHEA:71788"/>
    </physiologicalReaction>
</comment>
<comment type="cofactor">
    <cofactor evidence="1">
        <name>Fe(2+)</name>
        <dbReference type="ChEBI" id="CHEBI:29033"/>
    </cofactor>
</comment>
<comment type="activity regulation">
    <text evidence="1">Inhibited by EDTA.</text>
</comment>
<comment type="biophysicochemical properties">
    <kinetics>
        <KM evidence="1">0.06 mM for 2-oxoadipate</KM>
        <KM evidence="2">0.01 mM for 2-oxoadipate</KM>
        <text evidence="1">kcat is 330 min(-1).</text>
    </kinetics>
</comment>
<comment type="pathway">
    <text evidence="1">Amino-acid degradation.</text>
</comment>
<comment type="induction">
    <text evidence="1">Up-regulated when grown on L-lysine, D-lysine or 2-aminoadipate.</text>
</comment>
<comment type="disruption phenotype">
    <text evidence="1">Deletion mutant is unable to grow on either isomer of lysine.</text>
</comment>
<comment type="similarity">
    <text evidence="4">Belongs to the 2-oxoadipate dioxygenase/decarboxylase family.</text>
</comment>
<name>HGLS_PSEPK</name>
<keyword id="KW-0002">3D-structure</keyword>
<keyword id="KW-0223">Dioxygenase</keyword>
<keyword id="KW-0408">Iron</keyword>
<keyword id="KW-0560">Oxidoreductase</keyword>
<keyword id="KW-1185">Reference proteome</keyword>